<evidence type="ECO:0000255" key="1">
    <source>
        <dbReference type="HAMAP-Rule" id="MF_00657"/>
    </source>
</evidence>
<accession>A6T7W1</accession>
<name>Y1221_KLEP7</name>
<proteinExistence type="inferred from homology"/>
<comment type="cofactor">
    <cofactor evidence="1">
        <name>Fe(2+)</name>
        <dbReference type="ChEBI" id="CHEBI:29033"/>
    </cofactor>
    <text evidence="1">Binds 1 Fe(2+) ion per subunit.</text>
</comment>
<comment type="cofactor">
    <cofactor evidence="1">
        <name>L-ascorbate</name>
        <dbReference type="ChEBI" id="CHEBI:38290"/>
    </cofactor>
</comment>
<feature type="chain" id="PRO_0000346488" description="PKHD-type hydroxylase KPN78578_12210">
    <location>
        <begin position="1"/>
        <end position="224"/>
    </location>
</feature>
<feature type="domain" description="Fe2OG dioxygenase" evidence="1">
    <location>
        <begin position="77"/>
        <end position="176"/>
    </location>
</feature>
<feature type="binding site" evidence="1">
    <location>
        <position position="95"/>
    </location>
    <ligand>
        <name>Fe cation</name>
        <dbReference type="ChEBI" id="CHEBI:24875"/>
    </ligand>
</feature>
<feature type="binding site" evidence="1">
    <location>
        <position position="97"/>
    </location>
    <ligand>
        <name>Fe cation</name>
        <dbReference type="ChEBI" id="CHEBI:24875"/>
    </ligand>
</feature>
<feature type="binding site" evidence="1">
    <location>
        <position position="157"/>
    </location>
    <ligand>
        <name>Fe cation</name>
        <dbReference type="ChEBI" id="CHEBI:24875"/>
    </ligand>
</feature>
<feature type="binding site" evidence="1">
    <location>
        <position position="167"/>
    </location>
    <ligand>
        <name>2-oxoglutarate</name>
        <dbReference type="ChEBI" id="CHEBI:16810"/>
    </ligand>
</feature>
<keyword id="KW-0223">Dioxygenase</keyword>
<keyword id="KW-0408">Iron</keyword>
<keyword id="KW-0479">Metal-binding</keyword>
<keyword id="KW-0560">Oxidoreductase</keyword>
<keyword id="KW-0847">Vitamin C</keyword>
<reference key="1">
    <citation type="submission" date="2006-09" db="EMBL/GenBank/DDBJ databases">
        <authorList>
            <consortium name="The Klebsiella pneumonia Genome Sequencing Project"/>
            <person name="McClelland M."/>
            <person name="Sanderson E.K."/>
            <person name="Spieth J."/>
            <person name="Clifton W.S."/>
            <person name="Latreille P."/>
            <person name="Sabo A."/>
            <person name="Pepin K."/>
            <person name="Bhonagiri V."/>
            <person name="Porwollik S."/>
            <person name="Ali J."/>
            <person name="Wilson R.K."/>
        </authorList>
    </citation>
    <scope>NUCLEOTIDE SEQUENCE [LARGE SCALE GENOMIC DNA]</scope>
    <source>
        <strain>ATCC 700721 / MGH 78578</strain>
    </source>
</reference>
<dbReference type="EC" id="1.14.11.-" evidence="1"/>
<dbReference type="EMBL" id="CP000647">
    <property type="protein sequence ID" value="ABR76682.1"/>
    <property type="molecule type" value="Genomic_DNA"/>
</dbReference>
<dbReference type="SMR" id="A6T7W1"/>
<dbReference type="STRING" id="272620.KPN_01249"/>
<dbReference type="PaxDb" id="272620-KPN_01249"/>
<dbReference type="EnsemblBacteria" id="ABR76682">
    <property type="protein sequence ID" value="ABR76682"/>
    <property type="gene ID" value="KPN_01249"/>
</dbReference>
<dbReference type="KEGG" id="kpn:KPN_01249"/>
<dbReference type="HOGENOM" id="CLU_106663_0_0_6"/>
<dbReference type="Proteomes" id="UP000000265">
    <property type="component" value="Chromosome"/>
</dbReference>
<dbReference type="GO" id="GO:0016706">
    <property type="term" value="F:2-oxoglutarate-dependent dioxygenase activity"/>
    <property type="evidence" value="ECO:0007669"/>
    <property type="project" value="UniProtKB-UniRule"/>
</dbReference>
<dbReference type="GO" id="GO:0005506">
    <property type="term" value="F:iron ion binding"/>
    <property type="evidence" value="ECO:0007669"/>
    <property type="project" value="UniProtKB-UniRule"/>
</dbReference>
<dbReference type="GO" id="GO:0031418">
    <property type="term" value="F:L-ascorbic acid binding"/>
    <property type="evidence" value="ECO:0007669"/>
    <property type="project" value="UniProtKB-KW"/>
</dbReference>
<dbReference type="GO" id="GO:0006974">
    <property type="term" value="P:DNA damage response"/>
    <property type="evidence" value="ECO:0007669"/>
    <property type="project" value="TreeGrafter"/>
</dbReference>
<dbReference type="GO" id="GO:0006879">
    <property type="term" value="P:intracellular iron ion homeostasis"/>
    <property type="evidence" value="ECO:0007669"/>
    <property type="project" value="TreeGrafter"/>
</dbReference>
<dbReference type="FunFam" id="2.60.120.620:FF:000006">
    <property type="entry name" value="PKHD-type hydroxylase YbiX"/>
    <property type="match status" value="1"/>
</dbReference>
<dbReference type="Gene3D" id="2.60.120.620">
    <property type="entry name" value="q2cbj1_9rhob like domain"/>
    <property type="match status" value="1"/>
</dbReference>
<dbReference type="Gene3D" id="4.10.860.20">
    <property type="entry name" value="Rabenosyn, Rab binding domain"/>
    <property type="match status" value="1"/>
</dbReference>
<dbReference type="HAMAP" id="MF_00657">
    <property type="entry name" value="Hydroxyl_YbiX"/>
    <property type="match status" value="1"/>
</dbReference>
<dbReference type="InterPro" id="IPR005123">
    <property type="entry name" value="Oxoglu/Fe-dep_dioxygenase_dom"/>
</dbReference>
<dbReference type="InterPro" id="IPR041097">
    <property type="entry name" value="PKHD_C"/>
</dbReference>
<dbReference type="InterPro" id="IPR023550">
    <property type="entry name" value="PKHD_hydroxylase"/>
</dbReference>
<dbReference type="InterPro" id="IPR006620">
    <property type="entry name" value="Pro_4_hyd_alph"/>
</dbReference>
<dbReference type="InterPro" id="IPR044862">
    <property type="entry name" value="Pro_4_hyd_alph_FE2OG_OXY"/>
</dbReference>
<dbReference type="NCBIfam" id="NF003972">
    <property type="entry name" value="PRK05467.1-1"/>
    <property type="match status" value="1"/>
</dbReference>
<dbReference type="NCBIfam" id="NF003974">
    <property type="entry name" value="PRK05467.1-3"/>
    <property type="match status" value="1"/>
</dbReference>
<dbReference type="NCBIfam" id="NF003975">
    <property type="entry name" value="PRK05467.1-4"/>
    <property type="match status" value="1"/>
</dbReference>
<dbReference type="PANTHER" id="PTHR41536">
    <property type="entry name" value="PKHD-TYPE HYDROXYLASE YBIX"/>
    <property type="match status" value="1"/>
</dbReference>
<dbReference type="PANTHER" id="PTHR41536:SF1">
    <property type="entry name" value="PKHD-TYPE HYDROXYLASE YBIX"/>
    <property type="match status" value="1"/>
</dbReference>
<dbReference type="Pfam" id="PF13640">
    <property type="entry name" value="2OG-FeII_Oxy_3"/>
    <property type="match status" value="1"/>
</dbReference>
<dbReference type="Pfam" id="PF18331">
    <property type="entry name" value="PKHD_C"/>
    <property type="match status" value="1"/>
</dbReference>
<dbReference type="SMART" id="SM00702">
    <property type="entry name" value="P4Hc"/>
    <property type="match status" value="1"/>
</dbReference>
<dbReference type="PROSITE" id="PS51471">
    <property type="entry name" value="FE2OG_OXY"/>
    <property type="match status" value="1"/>
</dbReference>
<sequence length="224" mass="25227">MYHIPDVLSTDQVAEFTRQLAQAEWVDGRVTVGSQGAAVKQNQQIDTRTPLYARLQAAVLDMLRGHPQFFSAALPRTISAPLFNRYGPGETYGFHVDGAVRQNGEAGWMRTDLSATLFLCDPESYEGGELVIEDTYGQHRVKLPAGHLVLYPASSLHCVTPVTRGVRQASFLWIQSMVRDDKQRAMLYDLDRTIQSLKARFGDGEEVLSLLNMYHNLLRQWTEV</sequence>
<gene>
    <name type="ordered locus">KPN78578_12210</name>
    <name type="ORF">KPN_01249</name>
</gene>
<organism>
    <name type="scientific">Klebsiella pneumoniae subsp. pneumoniae (strain ATCC 700721 / MGH 78578)</name>
    <dbReference type="NCBI Taxonomy" id="272620"/>
    <lineage>
        <taxon>Bacteria</taxon>
        <taxon>Pseudomonadati</taxon>
        <taxon>Pseudomonadota</taxon>
        <taxon>Gammaproteobacteria</taxon>
        <taxon>Enterobacterales</taxon>
        <taxon>Enterobacteriaceae</taxon>
        <taxon>Klebsiella/Raoultella group</taxon>
        <taxon>Klebsiella</taxon>
        <taxon>Klebsiella pneumoniae complex</taxon>
    </lineage>
</organism>
<protein>
    <recommendedName>
        <fullName evidence="1">PKHD-type hydroxylase KPN78578_12210</fullName>
        <ecNumber evidence="1">1.14.11.-</ecNumber>
    </recommendedName>
</protein>